<organism>
    <name type="scientific">Bordetella bronchiseptica (strain ATCC BAA-588 / NCTC 13252 / RB50)</name>
    <name type="common">Alcaligenes bronchisepticus</name>
    <dbReference type="NCBI Taxonomy" id="257310"/>
    <lineage>
        <taxon>Bacteria</taxon>
        <taxon>Pseudomonadati</taxon>
        <taxon>Pseudomonadota</taxon>
        <taxon>Betaproteobacteria</taxon>
        <taxon>Burkholderiales</taxon>
        <taxon>Alcaligenaceae</taxon>
        <taxon>Bordetella</taxon>
    </lineage>
</organism>
<accession>Q7WF21</accession>
<reference key="1">
    <citation type="journal article" date="2003" name="Nat. Genet.">
        <title>Comparative analysis of the genome sequences of Bordetella pertussis, Bordetella parapertussis and Bordetella bronchiseptica.</title>
        <authorList>
            <person name="Parkhill J."/>
            <person name="Sebaihia M."/>
            <person name="Preston A."/>
            <person name="Murphy L.D."/>
            <person name="Thomson N.R."/>
            <person name="Harris D.E."/>
            <person name="Holden M.T.G."/>
            <person name="Churcher C.M."/>
            <person name="Bentley S.D."/>
            <person name="Mungall K.L."/>
            <person name="Cerdeno-Tarraga A.-M."/>
            <person name="Temple L."/>
            <person name="James K.D."/>
            <person name="Harris B."/>
            <person name="Quail M.A."/>
            <person name="Achtman M."/>
            <person name="Atkin R."/>
            <person name="Baker S."/>
            <person name="Basham D."/>
            <person name="Bason N."/>
            <person name="Cherevach I."/>
            <person name="Chillingworth T."/>
            <person name="Collins M."/>
            <person name="Cronin A."/>
            <person name="Davis P."/>
            <person name="Doggett J."/>
            <person name="Feltwell T."/>
            <person name="Goble A."/>
            <person name="Hamlin N."/>
            <person name="Hauser H."/>
            <person name="Holroyd S."/>
            <person name="Jagels K."/>
            <person name="Leather S."/>
            <person name="Moule S."/>
            <person name="Norberczak H."/>
            <person name="O'Neil S."/>
            <person name="Ormond D."/>
            <person name="Price C."/>
            <person name="Rabbinowitsch E."/>
            <person name="Rutter S."/>
            <person name="Sanders M."/>
            <person name="Saunders D."/>
            <person name="Seeger K."/>
            <person name="Sharp S."/>
            <person name="Simmonds M."/>
            <person name="Skelton J."/>
            <person name="Squares R."/>
            <person name="Squares S."/>
            <person name="Stevens K."/>
            <person name="Unwin L."/>
            <person name="Whitehead S."/>
            <person name="Barrell B.G."/>
            <person name="Maskell D.J."/>
        </authorList>
    </citation>
    <scope>NUCLEOTIDE SEQUENCE [LARGE SCALE GENOMIC DNA]</scope>
    <source>
        <strain>ATCC BAA-588 / NCTC 13252 / RB50</strain>
    </source>
</reference>
<keyword id="KW-0963">Cytoplasm</keyword>
<keyword id="KW-0704">Schiff base</keyword>
<keyword id="KW-0784">Thiamine biosynthesis</keyword>
<keyword id="KW-0808">Transferase</keyword>
<proteinExistence type="inferred from homology"/>
<dbReference type="EC" id="2.8.1.10" evidence="1"/>
<dbReference type="EMBL" id="BX640450">
    <property type="protein sequence ID" value="CAE34822.1"/>
    <property type="status" value="ALT_INIT"/>
    <property type="molecule type" value="Genomic_DNA"/>
</dbReference>
<dbReference type="RefSeq" id="WP_033446412.1">
    <property type="nucleotide sequence ID" value="NC_002927.3"/>
</dbReference>
<dbReference type="SMR" id="Q7WF21"/>
<dbReference type="KEGG" id="bbr:BB4459"/>
<dbReference type="eggNOG" id="COG2022">
    <property type="taxonomic scope" value="Bacteria"/>
</dbReference>
<dbReference type="HOGENOM" id="CLU_062233_1_1_4"/>
<dbReference type="UniPathway" id="UPA00060"/>
<dbReference type="Proteomes" id="UP000001027">
    <property type="component" value="Chromosome"/>
</dbReference>
<dbReference type="GO" id="GO:0005737">
    <property type="term" value="C:cytoplasm"/>
    <property type="evidence" value="ECO:0007669"/>
    <property type="project" value="UniProtKB-SubCell"/>
</dbReference>
<dbReference type="GO" id="GO:1990107">
    <property type="term" value="F:thiazole synthase activity"/>
    <property type="evidence" value="ECO:0007669"/>
    <property type="project" value="UniProtKB-EC"/>
</dbReference>
<dbReference type="GO" id="GO:0009229">
    <property type="term" value="P:thiamine diphosphate biosynthetic process"/>
    <property type="evidence" value="ECO:0007669"/>
    <property type="project" value="UniProtKB-UniRule"/>
</dbReference>
<dbReference type="CDD" id="cd04728">
    <property type="entry name" value="ThiG"/>
    <property type="match status" value="1"/>
</dbReference>
<dbReference type="Gene3D" id="3.20.20.70">
    <property type="entry name" value="Aldolase class I"/>
    <property type="match status" value="1"/>
</dbReference>
<dbReference type="HAMAP" id="MF_00443">
    <property type="entry name" value="ThiG"/>
    <property type="match status" value="1"/>
</dbReference>
<dbReference type="InterPro" id="IPR013785">
    <property type="entry name" value="Aldolase_TIM"/>
</dbReference>
<dbReference type="InterPro" id="IPR033983">
    <property type="entry name" value="Thiazole_synthase_ThiG"/>
</dbReference>
<dbReference type="InterPro" id="IPR008867">
    <property type="entry name" value="ThiG"/>
</dbReference>
<dbReference type="PANTHER" id="PTHR34266">
    <property type="entry name" value="THIAZOLE SYNTHASE"/>
    <property type="match status" value="1"/>
</dbReference>
<dbReference type="PANTHER" id="PTHR34266:SF2">
    <property type="entry name" value="THIAZOLE SYNTHASE"/>
    <property type="match status" value="1"/>
</dbReference>
<dbReference type="Pfam" id="PF05690">
    <property type="entry name" value="ThiG"/>
    <property type="match status" value="1"/>
</dbReference>
<dbReference type="SUPFAM" id="SSF110399">
    <property type="entry name" value="ThiG-like"/>
    <property type="match status" value="1"/>
</dbReference>
<feature type="chain" id="PRO_0000162792" description="Thiazole synthase">
    <location>
        <begin position="1"/>
        <end position="265"/>
    </location>
</feature>
<feature type="active site" description="Schiff-base intermediate with DXP" evidence="1">
    <location>
        <position position="103"/>
    </location>
</feature>
<feature type="binding site" evidence="1">
    <location>
        <position position="164"/>
    </location>
    <ligand>
        <name>1-deoxy-D-xylulose 5-phosphate</name>
        <dbReference type="ChEBI" id="CHEBI:57792"/>
    </ligand>
</feature>
<feature type="binding site" evidence="1">
    <location>
        <begin position="190"/>
        <end position="191"/>
    </location>
    <ligand>
        <name>1-deoxy-D-xylulose 5-phosphate</name>
        <dbReference type="ChEBI" id="CHEBI:57792"/>
    </ligand>
</feature>
<feature type="binding site" evidence="1">
    <location>
        <begin position="212"/>
        <end position="213"/>
    </location>
    <ligand>
        <name>1-deoxy-D-xylulose 5-phosphate</name>
        <dbReference type="ChEBI" id="CHEBI:57792"/>
    </ligand>
</feature>
<sequence>MTTEDTLTIAGRSYQSRLLVGTGKYQDFAQTRAALDASGTQIVTVAIRRTNIGQNPDEPSLLDFVPPSQFTLLPNTAGCYSADDAVRTLRLARELLDGHDLVKLEVLGDPQNLFPNMPETLKATRTLVDEGFKVMVYCTDDPIQCRMLEDLGAVAVMPLASLIGSGMGILNPWNLRLIIDQSSVPVLVDAGVGTASDAAIAMELGCDGVLMNTAIAGARDPILMASAMRKAVEGGREAYLAGRVPRKLYSAAPSSPTEGLIAAVK</sequence>
<evidence type="ECO:0000255" key="1">
    <source>
        <dbReference type="HAMAP-Rule" id="MF_00443"/>
    </source>
</evidence>
<evidence type="ECO:0000305" key="2"/>
<comment type="function">
    <text evidence="1">Catalyzes the rearrangement of 1-deoxy-D-xylulose 5-phosphate (DXP) to produce the thiazole phosphate moiety of thiamine. Sulfur is provided by the thiocarboxylate moiety of the carrier protein ThiS. In vitro, sulfur can be provided by H(2)S.</text>
</comment>
<comment type="catalytic activity">
    <reaction evidence="1">
        <text>[ThiS sulfur-carrier protein]-C-terminal-Gly-aminoethanethioate + 2-iminoacetate + 1-deoxy-D-xylulose 5-phosphate = [ThiS sulfur-carrier protein]-C-terminal Gly-Gly + 2-[(2R,5Z)-2-carboxy-4-methylthiazol-5(2H)-ylidene]ethyl phosphate + 2 H2O + H(+)</text>
        <dbReference type="Rhea" id="RHEA:26297"/>
        <dbReference type="Rhea" id="RHEA-COMP:12909"/>
        <dbReference type="Rhea" id="RHEA-COMP:19908"/>
        <dbReference type="ChEBI" id="CHEBI:15377"/>
        <dbReference type="ChEBI" id="CHEBI:15378"/>
        <dbReference type="ChEBI" id="CHEBI:57792"/>
        <dbReference type="ChEBI" id="CHEBI:62899"/>
        <dbReference type="ChEBI" id="CHEBI:77846"/>
        <dbReference type="ChEBI" id="CHEBI:90778"/>
        <dbReference type="ChEBI" id="CHEBI:232372"/>
        <dbReference type="EC" id="2.8.1.10"/>
    </reaction>
</comment>
<comment type="pathway">
    <text evidence="1">Cofactor biosynthesis; thiamine diphosphate biosynthesis.</text>
</comment>
<comment type="subunit">
    <text evidence="1">Homotetramer. Forms heterodimers with either ThiH or ThiS.</text>
</comment>
<comment type="subcellular location">
    <subcellularLocation>
        <location evidence="1">Cytoplasm</location>
    </subcellularLocation>
</comment>
<comment type="similarity">
    <text evidence="1">Belongs to the ThiG family.</text>
</comment>
<comment type="sequence caution" evidence="2">
    <conflict type="erroneous initiation">
        <sequence resource="EMBL-CDS" id="CAE34822"/>
    </conflict>
</comment>
<gene>
    <name evidence="1" type="primary">thiG</name>
    <name type="ordered locus">BB4459</name>
</gene>
<protein>
    <recommendedName>
        <fullName evidence="1">Thiazole synthase</fullName>
        <ecNumber evidence="1">2.8.1.10</ecNumber>
    </recommendedName>
</protein>
<name>THIG_BORBR</name>